<dbReference type="EC" id="5.3.1.22"/>
<dbReference type="EMBL" id="AL939126">
    <property type="protein sequence ID" value="CAB36614.1"/>
    <property type="molecule type" value="Genomic_DNA"/>
</dbReference>
<dbReference type="PIR" id="T34860">
    <property type="entry name" value="T34860"/>
</dbReference>
<dbReference type="RefSeq" id="NP_630309.1">
    <property type="nucleotide sequence ID" value="NC_003888.3"/>
</dbReference>
<dbReference type="RefSeq" id="WP_003972721.1">
    <property type="nucleotide sequence ID" value="NZ_VNID01000009.1"/>
</dbReference>
<dbReference type="SMR" id="Q9Z596"/>
<dbReference type="STRING" id="100226.gene:17763865"/>
<dbReference type="PaxDb" id="100226-SCO6206"/>
<dbReference type="KEGG" id="sco:SCO6206"/>
<dbReference type="PATRIC" id="fig|100226.15.peg.6320"/>
<dbReference type="eggNOG" id="COG3622">
    <property type="taxonomic scope" value="Bacteria"/>
</dbReference>
<dbReference type="HOGENOM" id="CLU_050006_1_0_11"/>
<dbReference type="InParanoid" id="Q9Z596"/>
<dbReference type="OrthoDB" id="9786584at2"/>
<dbReference type="PhylomeDB" id="Q9Z596"/>
<dbReference type="BRENDA" id="5.3.1.22">
    <property type="organism ID" value="5998"/>
</dbReference>
<dbReference type="Proteomes" id="UP000001973">
    <property type="component" value="Chromosome"/>
</dbReference>
<dbReference type="GO" id="GO:0008903">
    <property type="term" value="F:hydroxypyruvate isomerase activity"/>
    <property type="evidence" value="ECO:0000318"/>
    <property type="project" value="GO_Central"/>
</dbReference>
<dbReference type="GO" id="GO:0046487">
    <property type="term" value="P:glyoxylate metabolic process"/>
    <property type="evidence" value="ECO:0000318"/>
    <property type="project" value="GO_Central"/>
</dbReference>
<dbReference type="FunFam" id="3.20.20.150:FF:000025">
    <property type="entry name" value="Hydroxypyruvate isomerase"/>
    <property type="match status" value="1"/>
</dbReference>
<dbReference type="Gene3D" id="3.20.20.150">
    <property type="entry name" value="Divalent-metal-dependent TIM barrel enzymes"/>
    <property type="match status" value="1"/>
</dbReference>
<dbReference type="InterPro" id="IPR026040">
    <property type="entry name" value="HyI-like"/>
</dbReference>
<dbReference type="InterPro" id="IPR050417">
    <property type="entry name" value="Sugar_Epim/Isomerase"/>
</dbReference>
<dbReference type="InterPro" id="IPR036237">
    <property type="entry name" value="Xyl_isomerase-like_sf"/>
</dbReference>
<dbReference type="InterPro" id="IPR013022">
    <property type="entry name" value="Xyl_isomerase-like_TIM-brl"/>
</dbReference>
<dbReference type="PANTHER" id="PTHR43489:SF6">
    <property type="entry name" value="HYDROXYPYRUVATE ISOMERASE-RELATED"/>
    <property type="match status" value="1"/>
</dbReference>
<dbReference type="PANTHER" id="PTHR43489">
    <property type="entry name" value="ISOMERASE"/>
    <property type="match status" value="1"/>
</dbReference>
<dbReference type="Pfam" id="PF01261">
    <property type="entry name" value="AP_endonuc_2"/>
    <property type="match status" value="1"/>
</dbReference>
<dbReference type="PIRSF" id="PIRSF006241">
    <property type="entry name" value="HyI"/>
    <property type="match status" value="1"/>
</dbReference>
<dbReference type="SUPFAM" id="SSF51658">
    <property type="entry name" value="Xylose isomerase-like"/>
    <property type="match status" value="1"/>
</dbReference>
<evidence type="ECO:0000250" key="1"/>
<evidence type="ECO:0000250" key="2">
    <source>
        <dbReference type="UniProtKB" id="Q9WYP7"/>
    </source>
</evidence>
<evidence type="ECO:0000256" key="3">
    <source>
        <dbReference type="SAM" id="MobiDB-lite"/>
    </source>
</evidence>
<evidence type="ECO:0000305" key="4"/>
<accession>Q9Z596</accession>
<gene>
    <name type="ordered locus">SCO6206</name>
    <name type="ORF">SC2G5.27c</name>
</gene>
<reference key="1">
    <citation type="journal article" date="2002" name="Nature">
        <title>Complete genome sequence of the model actinomycete Streptomyces coelicolor A3(2).</title>
        <authorList>
            <person name="Bentley S.D."/>
            <person name="Chater K.F."/>
            <person name="Cerdeno-Tarraga A.-M."/>
            <person name="Challis G.L."/>
            <person name="Thomson N.R."/>
            <person name="James K.D."/>
            <person name="Harris D.E."/>
            <person name="Quail M.A."/>
            <person name="Kieser H."/>
            <person name="Harper D."/>
            <person name="Bateman A."/>
            <person name="Brown S."/>
            <person name="Chandra G."/>
            <person name="Chen C.W."/>
            <person name="Collins M."/>
            <person name="Cronin A."/>
            <person name="Fraser A."/>
            <person name="Goble A."/>
            <person name="Hidalgo J."/>
            <person name="Hornsby T."/>
            <person name="Howarth S."/>
            <person name="Huang C.-H."/>
            <person name="Kieser T."/>
            <person name="Larke L."/>
            <person name="Murphy L.D."/>
            <person name="Oliver K."/>
            <person name="O'Neil S."/>
            <person name="Rabbinowitsch E."/>
            <person name="Rajandream M.A."/>
            <person name="Rutherford K.M."/>
            <person name="Rutter S."/>
            <person name="Seeger K."/>
            <person name="Saunders D."/>
            <person name="Sharp S."/>
            <person name="Squares R."/>
            <person name="Squares S."/>
            <person name="Taylor K."/>
            <person name="Warren T."/>
            <person name="Wietzorrek A."/>
            <person name="Woodward J.R."/>
            <person name="Barrell B.G."/>
            <person name="Parkhill J."/>
            <person name="Hopwood D.A."/>
        </authorList>
    </citation>
    <scope>NUCLEOTIDE SEQUENCE [LARGE SCALE GENOMIC DNA]</scope>
    <source>
        <strain>ATCC BAA-471 / A3(2) / M145</strain>
    </source>
</reference>
<keyword id="KW-0413">Isomerase</keyword>
<keyword id="KW-1185">Reference proteome</keyword>
<feature type="chain" id="PRO_0000209112" description="Putative hydroxypyruvate isomerase">
    <location>
        <begin position="1"/>
        <end position="279"/>
    </location>
</feature>
<feature type="region of interest" description="Disordered" evidence="3">
    <location>
        <begin position="260"/>
        <end position="279"/>
    </location>
</feature>
<feature type="active site" description="Proton donor/acceptor" evidence="2">
    <location>
        <position position="155"/>
    </location>
</feature>
<feature type="active site" description="Proton donor/acceptor" evidence="2">
    <location>
        <position position="256"/>
    </location>
</feature>
<proteinExistence type="inferred from homology"/>
<comment type="function">
    <text evidence="1">Catalyzes the reversible isomerization between hydroxypyruvate and 2-hydroxy-3-oxopropanoate (also termed tartronate semialdehyde).</text>
</comment>
<comment type="catalytic activity">
    <reaction>
        <text>3-hydroxypyruvate = 2-hydroxy-3-oxopropanoate</text>
        <dbReference type="Rhea" id="RHEA:11952"/>
        <dbReference type="ChEBI" id="CHEBI:17180"/>
        <dbReference type="ChEBI" id="CHEBI:57978"/>
        <dbReference type="EC" id="5.3.1.22"/>
    </reaction>
</comment>
<comment type="similarity">
    <text evidence="4">Belongs to the hyi family.</text>
</comment>
<protein>
    <recommendedName>
        <fullName>Putative hydroxypyruvate isomerase</fullName>
        <ecNumber>5.3.1.22</ecNumber>
    </recommendedName>
</protein>
<organism>
    <name type="scientific">Streptomyces coelicolor (strain ATCC BAA-471 / A3(2) / M145)</name>
    <dbReference type="NCBI Taxonomy" id="100226"/>
    <lineage>
        <taxon>Bacteria</taxon>
        <taxon>Bacillati</taxon>
        <taxon>Actinomycetota</taxon>
        <taxon>Actinomycetes</taxon>
        <taxon>Kitasatosporales</taxon>
        <taxon>Streptomycetaceae</taxon>
        <taxon>Streptomyces</taxon>
        <taxon>Streptomyces albidoflavus group</taxon>
    </lineage>
</organism>
<name>Y6206_STRCO</name>
<sequence>MGFADQRFNVNLSILFTELPLLERPAAAAAAGFTAVELWWPWIDSPTPEQSELDALKSAIEDAGVQLTGLNFYAGQLPGPDRGALSIPGEESERFRANIDVAADFARSLGCTALNALYGNRVEGVDPAEQDRLALENLVLAARAADRIGAVLLVEALNKPESPRYPLVSAPAAIAVVDRVNEATGLGNAKFLMDLYHLSMNGEDLPQVIDAYAAKTGHVQIADNPGRGAPGTGSLPLEDLLDRLAKAGYDGWVGLEYKPGDDPSAQSFSWLPAGARAAR</sequence>